<reference key="1">
    <citation type="journal article" date="2002" name="J. Mol. Microbiol. Biotechnol.">
        <title>The genome of Methanosarcina mazei: evidence for lateral gene transfer between Bacteria and Archaea.</title>
        <authorList>
            <person name="Deppenmeier U."/>
            <person name="Johann A."/>
            <person name="Hartsch T."/>
            <person name="Merkl R."/>
            <person name="Schmitz R.A."/>
            <person name="Martinez-Arias R."/>
            <person name="Henne A."/>
            <person name="Wiezer A."/>
            <person name="Baeumer S."/>
            <person name="Jacobi C."/>
            <person name="Brueggemann H."/>
            <person name="Lienard T."/>
            <person name="Christmann A."/>
            <person name="Boemecke M."/>
            <person name="Steckel S."/>
            <person name="Bhattacharyya A."/>
            <person name="Lykidis A."/>
            <person name="Overbeek R."/>
            <person name="Klenk H.-P."/>
            <person name="Gunsalus R.P."/>
            <person name="Fritz H.-J."/>
            <person name="Gottschalk G."/>
        </authorList>
    </citation>
    <scope>NUCLEOTIDE SEQUENCE [LARGE SCALE GENOMIC DNA]</scope>
    <source>
        <strain>ATCC BAA-159 / DSM 3647 / Goe1 / Go1 / JCM 11833 / OCM 88</strain>
    </source>
</reference>
<feature type="chain" id="PRO_0000156120" description="Diphthine synthase">
    <location>
        <begin position="1"/>
        <end position="266"/>
    </location>
</feature>
<feature type="binding site" evidence="1">
    <location>
        <position position="9"/>
    </location>
    <ligand>
        <name>S-adenosyl-L-methionine</name>
        <dbReference type="ChEBI" id="CHEBI:59789"/>
    </ligand>
</feature>
<feature type="binding site" evidence="1">
    <location>
        <position position="84"/>
    </location>
    <ligand>
        <name>S-adenosyl-L-methionine</name>
        <dbReference type="ChEBI" id="CHEBI:59789"/>
    </ligand>
</feature>
<feature type="binding site" evidence="1">
    <location>
        <position position="87"/>
    </location>
    <ligand>
        <name>S-adenosyl-L-methionine</name>
        <dbReference type="ChEBI" id="CHEBI:59789"/>
    </ligand>
</feature>
<feature type="binding site" evidence="1">
    <location>
        <begin position="112"/>
        <end position="113"/>
    </location>
    <ligand>
        <name>S-adenosyl-L-methionine</name>
        <dbReference type="ChEBI" id="CHEBI:59789"/>
    </ligand>
</feature>
<feature type="binding site" evidence="1">
    <location>
        <position position="169"/>
    </location>
    <ligand>
        <name>S-adenosyl-L-methionine</name>
        <dbReference type="ChEBI" id="CHEBI:59789"/>
    </ligand>
</feature>
<feature type="binding site" evidence="1">
    <location>
        <position position="210"/>
    </location>
    <ligand>
        <name>S-adenosyl-L-methionine</name>
        <dbReference type="ChEBI" id="CHEBI:59789"/>
    </ligand>
</feature>
<feature type="binding site" evidence="1">
    <location>
        <position position="235"/>
    </location>
    <ligand>
        <name>S-adenosyl-L-methionine</name>
        <dbReference type="ChEBI" id="CHEBI:59789"/>
    </ligand>
</feature>
<comment type="function">
    <text evidence="1">S-adenosyl-L-methionine-dependent methyltransferase that catalyzes the trimethylation of the amino group of the modified target histidine residue in translation elongation factor 2 (EF-2), to form an intermediate called diphthine. The three successive methylation reactions represent the second step of diphthamide biosynthesis.</text>
</comment>
<comment type="catalytic activity">
    <reaction evidence="1">
        <text>2-[(3S)-amino-3-carboxypropyl]-L-histidyl-[translation elongation factor 2] + 3 S-adenosyl-L-methionine = diphthine-[translation elongation factor 2] + 3 S-adenosyl-L-homocysteine + 3 H(+)</text>
        <dbReference type="Rhea" id="RHEA:36415"/>
        <dbReference type="Rhea" id="RHEA-COMP:9749"/>
        <dbReference type="Rhea" id="RHEA-COMP:10172"/>
        <dbReference type="ChEBI" id="CHEBI:15378"/>
        <dbReference type="ChEBI" id="CHEBI:57856"/>
        <dbReference type="ChEBI" id="CHEBI:59789"/>
        <dbReference type="ChEBI" id="CHEBI:73995"/>
        <dbReference type="ChEBI" id="CHEBI:82696"/>
        <dbReference type="EC" id="2.1.1.98"/>
    </reaction>
</comment>
<comment type="pathway">
    <text evidence="1">Protein modification; peptidyl-diphthamide biosynthesis.</text>
</comment>
<comment type="subunit">
    <text evidence="1">Homodimer.</text>
</comment>
<comment type="similarity">
    <text evidence="1">Belongs to the diphthine synthase family.</text>
</comment>
<gene>
    <name evidence="1" type="primary">dphB</name>
    <name type="ordered locus">MM_2355</name>
</gene>
<organism>
    <name type="scientific">Methanosarcina mazei (strain ATCC BAA-159 / DSM 3647 / Goe1 / Go1 / JCM 11833 / OCM 88)</name>
    <name type="common">Methanosarcina frisia</name>
    <dbReference type="NCBI Taxonomy" id="192952"/>
    <lineage>
        <taxon>Archaea</taxon>
        <taxon>Methanobacteriati</taxon>
        <taxon>Methanobacteriota</taxon>
        <taxon>Stenosarchaea group</taxon>
        <taxon>Methanomicrobia</taxon>
        <taxon>Methanosarcinales</taxon>
        <taxon>Methanosarcinaceae</taxon>
        <taxon>Methanosarcina</taxon>
    </lineage>
</organism>
<sequence length="266" mass="29397">MLTFIGLGLFDEYDISLKGLEAVKEADLVYAEFYTSCLMGTNPEKMEKLYGKKVHLLSREDVEQHPDWLDNARDKKVAFLTGGDTMVSTTHVDLRLRAEKLGIETRLIHGASITSAVSGLTGLQNYRFGKSASIPYPYESRRGTKVISETPYDTIKQNSSFGLHTLVFLDIDKDKGFMSVNIALKLLLEVESKRGEGVMDRAVAVGIARAGSEKPVVKAGYAEDLKGFDFGKPLHILVVPGKLHFLEAEALVKLADGPEEIMENIE</sequence>
<proteinExistence type="inferred from homology"/>
<protein>
    <recommendedName>
        <fullName evidence="1">Diphthine synthase</fullName>
        <ecNumber evidence="1">2.1.1.98</ecNumber>
    </recommendedName>
    <alternativeName>
        <fullName evidence="1">Diphthamide biosynthesis methyltransferase</fullName>
    </alternativeName>
</protein>
<name>DPHB_METMA</name>
<dbReference type="EC" id="2.1.1.98" evidence="1"/>
<dbReference type="EMBL" id="AE008384">
    <property type="protein sequence ID" value="AAM32051.1"/>
    <property type="molecule type" value="Genomic_DNA"/>
</dbReference>
<dbReference type="SMR" id="Q8PUH9"/>
<dbReference type="KEGG" id="mma:MM_2355"/>
<dbReference type="PATRIC" id="fig|192952.21.peg.2695"/>
<dbReference type="eggNOG" id="arCOG04161">
    <property type="taxonomic scope" value="Archaea"/>
</dbReference>
<dbReference type="HOGENOM" id="CLU_066040_0_0_2"/>
<dbReference type="UniPathway" id="UPA00559"/>
<dbReference type="Proteomes" id="UP000000595">
    <property type="component" value="Chromosome"/>
</dbReference>
<dbReference type="GO" id="GO:0004164">
    <property type="term" value="F:diphthine synthase activity"/>
    <property type="evidence" value="ECO:0007669"/>
    <property type="project" value="UniProtKB-UniRule"/>
</dbReference>
<dbReference type="GO" id="GO:0032259">
    <property type="term" value="P:methylation"/>
    <property type="evidence" value="ECO:0007669"/>
    <property type="project" value="UniProtKB-KW"/>
</dbReference>
<dbReference type="GO" id="GO:0017183">
    <property type="term" value="P:protein histidyl modification to diphthamide"/>
    <property type="evidence" value="ECO:0007669"/>
    <property type="project" value="UniProtKB-UniRule"/>
</dbReference>
<dbReference type="CDD" id="cd11647">
    <property type="entry name" value="DHP5_DphB"/>
    <property type="match status" value="1"/>
</dbReference>
<dbReference type="Gene3D" id="3.40.1010.10">
    <property type="entry name" value="Cobalt-precorrin-4 Transmethylase, Domain 1"/>
    <property type="match status" value="1"/>
</dbReference>
<dbReference type="Gene3D" id="3.30.950.10">
    <property type="entry name" value="Methyltransferase, Cobalt-precorrin-4 Transmethylase, Domain 2"/>
    <property type="match status" value="1"/>
</dbReference>
<dbReference type="HAMAP" id="MF_01084">
    <property type="entry name" value="Diphthine_synth"/>
    <property type="match status" value="1"/>
</dbReference>
<dbReference type="InterPro" id="IPR000878">
    <property type="entry name" value="4pyrrol_Mease"/>
</dbReference>
<dbReference type="InterPro" id="IPR035996">
    <property type="entry name" value="4pyrrol_Methylase_sf"/>
</dbReference>
<dbReference type="InterPro" id="IPR014777">
    <property type="entry name" value="4pyrrole_Mease_sub1"/>
</dbReference>
<dbReference type="InterPro" id="IPR014776">
    <property type="entry name" value="4pyrrole_Mease_sub2"/>
</dbReference>
<dbReference type="InterPro" id="IPR004551">
    <property type="entry name" value="Dphthn_synthase"/>
</dbReference>
<dbReference type="NCBIfam" id="TIGR00522">
    <property type="entry name" value="dph5"/>
    <property type="match status" value="1"/>
</dbReference>
<dbReference type="PANTHER" id="PTHR10882:SF0">
    <property type="entry name" value="DIPHTHINE METHYL ESTER SYNTHASE"/>
    <property type="match status" value="1"/>
</dbReference>
<dbReference type="PANTHER" id="PTHR10882">
    <property type="entry name" value="DIPHTHINE SYNTHASE"/>
    <property type="match status" value="1"/>
</dbReference>
<dbReference type="Pfam" id="PF00590">
    <property type="entry name" value="TP_methylase"/>
    <property type="match status" value="1"/>
</dbReference>
<dbReference type="PIRSF" id="PIRSF036432">
    <property type="entry name" value="Diphthine_synth"/>
    <property type="match status" value="1"/>
</dbReference>
<dbReference type="SUPFAM" id="SSF53790">
    <property type="entry name" value="Tetrapyrrole methylase"/>
    <property type="match status" value="1"/>
</dbReference>
<keyword id="KW-0489">Methyltransferase</keyword>
<keyword id="KW-0949">S-adenosyl-L-methionine</keyword>
<keyword id="KW-0808">Transferase</keyword>
<evidence type="ECO:0000255" key="1">
    <source>
        <dbReference type="HAMAP-Rule" id="MF_01084"/>
    </source>
</evidence>
<accession>Q8PUH9</accession>